<keyword id="KW-0119">Carbohydrate metabolism</keyword>
<keyword id="KW-0150">Chloroplast</keyword>
<keyword id="KW-1015">Disulfide bond</keyword>
<keyword id="KW-0313">Glucose metabolism</keyword>
<keyword id="KW-0521">NADP</keyword>
<keyword id="KW-0560">Oxidoreductase</keyword>
<keyword id="KW-0576">Peroxisome</keyword>
<keyword id="KW-0934">Plastid</keyword>
<keyword id="KW-1185">Reference proteome</keyword>
<keyword id="KW-0809">Transit peptide</keyword>
<comment type="function">
    <text evidence="5">Catalyzes the rate-limiting step of the oxidative pentose-phosphate pathway, which represents a route for the dissimilation of carbohydrates besides glycolysis (PubMed:15634201). The main function of this enzyme is to provide reducing power (NADPH) and pentose phosphates for fatty acid and nucleic acid synthesis which are involved in membrane synthesis and cell division (PubMed:15634201).</text>
</comment>
<comment type="catalytic activity">
    <reaction evidence="5">
        <text>D-glucose 6-phosphate + NADP(+) = 6-phospho-D-glucono-1,5-lactone + NADPH + H(+)</text>
        <dbReference type="Rhea" id="RHEA:15841"/>
        <dbReference type="ChEBI" id="CHEBI:15378"/>
        <dbReference type="ChEBI" id="CHEBI:57783"/>
        <dbReference type="ChEBI" id="CHEBI:57955"/>
        <dbReference type="ChEBI" id="CHEBI:58349"/>
        <dbReference type="ChEBI" id="CHEBI:61548"/>
        <dbReference type="EC" id="1.1.1.49"/>
    </reaction>
</comment>
<comment type="activity regulation">
    <text evidence="3">Regulated by metabolites. Post-translationally inactivated by cysteine-mediated redox modification via the ferredoxin-thioredoxin system in the light and this avoids futile cycles with photosynthetic CO2 fixation.</text>
</comment>
<comment type="biophysicochemical properties">
    <kinetics>
        <KM evidence="5">4.3 uM for NADP</KM>
    </kinetics>
    <phDependence>
        <text evidence="5">Optimum pH is 8.0.</text>
    </phDependence>
</comment>
<comment type="pathway">
    <text evidence="8">Carbohydrate degradation; pentose phosphate pathway; D-ribulose 5-phosphate from D-glucose 6-phosphate (oxidative stage): step 1/3.</text>
</comment>
<comment type="subunit">
    <text evidence="1 6">Forms homodimer (By similarity). Interacts with G6PD2, G6PD3 and G6PD4 (PubMed:21309870).</text>
</comment>
<comment type="subcellular location">
    <subcellularLocation>
        <location evidence="6">Plastid</location>
        <location evidence="6">Chloroplast stroma</location>
    </subcellularLocation>
    <subcellularLocation>
        <location evidence="6">Peroxisome</location>
    </subcellularLocation>
</comment>
<comment type="tissue specificity">
    <text evidence="5">Expressed in leaves, stems, buds, flowers and siliques.</text>
</comment>
<comment type="developmental stage">
    <text>Increase of activity in the apex linked to the early stages of the transition from vegetative to reproductive growth.</text>
</comment>
<comment type="miscellaneous">
    <text evidence="7">There are 6 glucose-6-phosphate 1-dehydrogenase genes in A.thaliana.</text>
</comment>
<comment type="similarity">
    <text evidence="8">Belongs to the glucose-6-phosphate dehydrogenase family.</text>
</comment>
<comment type="sequence caution" evidence="8">
    <conflict type="frameshift">
        <sequence resource="EMBL-CDS" id="CAA59012"/>
    </conflict>
</comment>
<organism>
    <name type="scientific">Arabidopsis thaliana</name>
    <name type="common">Mouse-ear cress</name>
    <dbReference type="NCBI Taxonomy" id="3702"/>
    <lineage>
        <taxon>Eukaryota</taxon>
        <taxon>Viridiplantae</taxon>
        <taxon>Streptophyta</taxon>
        <taxon>Embryophyta</taxon>
        <taxon>Tracheophyta</taxon>
        <taxon>Spermatophyta</taxon>
        <taxon>Magnoliopsida</taxon>
        <taxon>eudicotyledons</taxon>
        <taxon>Gunneridae</taxon>
        <taxon>Pentapetalae</taxon>
        <taxon>rosids</taxon>
        <taxon>malvids</taxon>
        <taxon>Brassicales</taxon>
        <taxon>Brassicaceae</taxon>
        <taxon>Camelineae</taxon>
        <taxon>Arabidopsis</taxon>
    </lineage>
</organism>
<evidence type="ECO:0000250" key="1">
    <source>
        <dbReference type="UniProtKB" id="P11411"/>
    </source>
</evidence>
<evidence type="ECO:0000250" key="2">
    <source>
        <dbReference type="UniProtKB" id="P11413"/>
    </source>
</evidence>
<evidence type="ECO:0000250" key="3">
    <source>
        <dbReference type="UniProtKB" id="Q43839"/>
    </source>
</evidence>
<evidence type="ECO:0000255" key="4"/>
<evidence type="ECO:0000269" key="5">
    <source>
    </source>
</evidence>
<evidence type="ECO:0000269" key="6">
    <source>
    </source>
</evidence>
<evidence type="ECO:0000303" key="7">
    <source>
    </source>
</evidence>
<evidence type="ECO:0000305" key="8"/>
<evidence type="ECO:0000312" key="9">
    <source>
        <dbReference type="Araport" id="AT5G35790"/>
    </source>
</evidence>
<evidence type="ECO:0000312" key="10">
    <source>
        <dbReference type="EMBL" id="BAB09918.1"/>
    </source>
</evidence>
<gene>
    <name evidence="7" type="primary">G6PD1</name>
    <name evidence="8" type="synonym">APG1</name>
    <name evidence="9" type="ordered locus">At5g35790</name>
    <name evidence="10" type="ORF">MIK22.2</name>
    <name evidence="8" type="ORF">MWP19.3</name>
</gene>
<dbReference type="EC" id="1.1.1.49" evidence="5"/>
<dbReference type="EMBL" id="AJ001359">
    <property type="protein sequence ID" value="CAA04696.1"/>
    <property type="molecule type" value="mRNA"/>
</dbReference>
<dbReference type="EMBL" id="AB005236">
    <property type="protein sequence ID" value="BAB09918.1"/>
    <property type="molecule type" value="Genomic_DNA"/>
</dbReference>
<dbReference type="EMBL" id="CP002688">
    <property type="protein sequence ID" value="AED94018.1"/>
    <property type="molecule type" value="Genomic_DNA"/>
</dbReference>
<dbReference type="EMBL" id="AY099561">
    <property type="protein sequence ID" value="AAM20413.1"/>
    <property type="molecule type" value="mRNA"/>
</dbReference>
<dbReference type="EMBL" id="BT002133">
    <property type="protein sequence ID" value="AAN72144.1"/>
    <property type="molecule type" value="mRNA"/>
</dbReference>
<dbReference type="EMBL" id="AY086213">
    <property type="protein sequence ID" value="AAM64291.1"/>
    <property type="molecule type" value="mRNA"/>
</dbReference>
<dbReference type="EMBL" id="X84230">
    <property type="protein sequence ID" value="CAA59012.1"/>
    <property type="status" value="ALT_FRAME"/>
    <property type="molecule type" value="mRNA"/>
</dbReference>
<dbReference type="RefSeq" id="NP_198428.1">
    <property type="nucleotide sequence ID" value="NM_122970.6"/>
</dbReference>
<dbReference type="SMR" id="Q43727"/>
<dbReference type="BioGRID" id="18812">
    <property type="interactions" value="5"/>
</dbReference>
<dbReference type="FunCoup" id="Q43727">
    <property type="interactions" value="1031"/>
</dbReference>
<dbReference type="IntAct" id="Q43727">
    <property type="interactions" value="1"/>
</dbReference>
<dbReference type="STRING" id="3702.Q43727"/>
<dbReference type="iPTMnet" id="Q43727"/>
<dbReference type="PaxDb" id="3702-AT5G35790.1"/>
<dbReference type="ProteomicsDB" id="248600"/>
<dbReference type="EnsemblPlants" id="AT5G35790.1">
    <property type="protein sequence ID" value="AT5G35790.1"/>
    <property type="gene ID" value="AT5G35790"/>
</dbReference>
<dbReference type="GeneID" id="833559"/>
<dbReference type="Gramene" id="AT5G35790.1">
    <property type="protein sequence ID" value="AT5G35790.1"/>
    <property type="gene ID" value="AT5G35790"/>
</dbReference>
<dbReference type="KEGG" id="ath:AT5G35790"/>
<dbReference type="Araport" id="AT5G35790"/>
<dbReference type="TAIR" id="AT5G35790">
    <property type="gene designation" value="G6PD1"/>
</dbReference>
<dbReference type="eggNOG" id="KOG0563">
    <property type="taxonomic scope" value="Eukaryota"/>
</dbReference>
<dbReference type="HOGENOM" id="CLU_013524_2_3_1"/>
<dbReference type="InParanoid" id="Q43727"/>
<dbReference type="OMA" id="PDEGIQM"/>
<dbReference type="PhylomeDB" id="Q43727"/>
<dbReference type="BRENDA" id="1.1.1.49">
    <property type="organism ID" value="399"/>
</dbReference>
<dbReference type="UniPathway" id="UPA00115">
    <property type="reaction ID" value="UER00408"/>
</dbReference>
<dbReference type="PRO" id="PR:Q43727"/>
<dbReference type="Proteomes" id="UP000006548">
    <property type="component" value="Chromosome 5"/>
</dbReference>
<dbReference type="ExpressionAtlas" id="Q43727">
    <property type="expression patterns" value="baseline and differential"/>
</dbReference>
<dbReference type="GO" id="GO:0009507">
    <property type="term" value="C:chloroplast"/>
    <property type="evidence" value="ECO:0007005"/>
    <property type="project" value="TAIR"/>
</dbReference>
<dbReference type="GO" id="GO:0009570">
    <property type="term" value="C:chloroplast stroma"/>
    <property type="evidence" value="ECO:0007005"/>
    <property type="project" value="TAIR"/>
</dbReference>
<dbReference type="GO" id="GO:0005777">
    <property type="term" value="C:peroxisome"/>
    <property type="evidence" value="ECO:0007669"/>
    <property type="project" value="UniProtKB-SubCell"/>
</dbReference>
<dbReference type="GO" id="GO:0004345">
    <property type="term" value="F:glucose-6-phosphate dehydrogenase activity"/>
    <property type="evidence" value="ECO:0000314"/>
    <property type="project" value="TAIR"/>
</dbReference>
<dbReference type="GO" id="GO:0050661">
    <property type="term" value="F:NADP binding"/>
    <property type="evidence" value="ECO:0007669"/>
    <property type="project" value="InterPro"/>
</dbReference>
<dbReference type="GO" id="GO:0006006">
    <property type="term" value="P:glucose metabolic process"/>
    <property type="evidence" value="ECO:0000314"/>
    <property type="project" value="TAIR"/>
</dbReference>
<dbReference type="GO" id="GO:0009051">
    <property type="term" value="P:pentose-phosphate shunt, oxidative branch"/>
    <property type="evidence" value="ECO:0000314"/>
    <property type="project" value="TAIR"/>
</dbReference>
<dbReference type="FunFam" id="3.30.360.10:FF:000018">
    <property type="entry name" value="Glucose-6-phosphate 1-dehydrogenase"/>
    <property type="match status" value="1"/>
</dbReference>
<dbReference type="FunFam" id="3.40.50.720:FF:000222">
    <property type="entry name" value="Glucose-6-phosphate 1-dehydrogenase"/>
    <property type="match status" value="1"/>
</dbReference>
<dbReference type="Gene3D" id="3.30.360.10">
    <property type="entry name" value="Dihydrodipicolinate Reductase, domain 2"/>
    <property type="match status" value="1"/>
</dbReference>
<dbReference type="Gene3D" id="3.40.50.720">
    <property type="entry name" value="NAD(P)-binding Rossmann-like Domain"/>
    <property type="match status" value="1"/>
</dbReference>
<dbReference type="HAMAP" id="MF_00966">
    <property type="entry name" value="G6PD"/>
    <property type="match status" value="1"/>
</dbReference>
<dbReference type="InterPro" id="IPR001282">
    <property type="entry name" value="G6P_DH"/>
</dbReference>
<dbReference type="InterPro" id="IPR019796">
    <property type="entry name" value="G6P_DH_AS"/>
</dbReference>
<dbReference type="InterPro" id="IPR022675">
    <property type="entry name" value="G6P_DH_C"/>
</dbReference>
<dbReference type="InterPro" id="IPR022674">
    <property type="entry name" value="G6P_DH_NAD-bd"/>
</dbReference>
<dbReference type="InterPro" id="IPR036291">
    <property type="entry name" value="NAD(P)-bd_dom_sf"/>
</dbReference>
<dbReference type="NCBIfam" id="TIGR00871">
    <property type="entry name" value="zwf"/>
    <property type="match status" value="1"/>
</dbReference>
<dbReference type="PANTHER" id="PTHR23429:SF13">
    <property type="entry name" value="GLUCOSE-6-PHOSPHATE 1-DEHYDROGENASE 1, CHLOROPLASTIC"/>
    <property type="match status" value="1"/>
</dbReference>
<dbReference type="PANTHER" id="PTHR23429">
    <property type="entry name" value="GLUCOSE-6-PHOSPHATE 1-DEHYDROGENASE G6PD"/>
    <property type="match status" value="1"/>
</dbReference>
<dbReference type="Pfam" id="PF02781">
    <property type="entry name" value="G6PD_C"/>
    <property type="match status" value="1"/>
</dbReference>
<dbReference type="Pfam" id="PF00479">
    <property type="entry name" value="G6PD_N"/>
    <property type="match status" value="1"/>
</dbReference>
<dbReference type="PIRSF" id="PIRSF000110">
    <property type="entry name" value="G6PD"/>
    <property type="match status" value="1"/>
</dbReference>
<dbReference type="PRINTS" id="PR00079">
    <property type="entry name" value="G6PDHDRGNASE"/>
</dbReference>
<dbReference type="SUPFAM" id="SSF55347">
    <property type="entry name" value="Glyceraldehyde-3-phosphate dehydrogenase-like, C-terminal domain"/>
    <property type="match status" value="1"/>
</dbReference>
<dbReference type="SUPFAM" id="SSF51735">
    <property type="entry name" value="NAD(P)-binding Rossmann-fold domains"/>
    <property type="match status" value="1"/>
</dbReference>
<dbReference type="PROSITE" id="PS00069">
    <property type="entry name" value="G6P_DEHYDROGENASE"/>
    <property type="match status" value="1"/>
</dbReference>
<reference key="1">
    <citation type="journal article" date="1999" name="Plant Mol. Biol.">
        <title>Evidence for functional convergence of redox regulation in G6PDH isoforms of cyanobacteria and higher plants.</title>
        <authorList>
            <person name="Wendt U.K."/>
            <person name="Hauschild R."/>
            <person name="Lange C."/>
            <person name="Pietersma M."/>
            <person name="Wenderoth I."/>
            <person name="von Schaewen A."/>
        </authorList>
    </citation>
    <scope>NUCLEOTIDE SEQUENCE [MRNA]</scope>
</reference>
<reference key="2">
    <citation type="journal article" date="1997" name="DNA Res.">
        <title>Structural analysis of Arabidopsis thaliana chromosome 5. I. Sequence features of the 1.6 Mb regions covered by twenty physically assigned P1 clones.</title>
        <authorList>
            <person name="Sato S."/>
            <person name="Kotani H."/>
            <person name="Nakamura Y."/>
            <person name="Kaneko T."/>
            <person name="Asamizu E."/>
            <person name="Fukami M."/>
            <person name="Miyajima N."/>
            <person name="Tabata S."/>
        </authorList>
    </citation>
    <scope>NUCLEOTIDE SEQUENCE [LARGE SCALE GENOMIC DNA]</scope>
    <source>
        <strain>cv. Columbia</strain>
    </source>
</reference>
<reference key="3">
    <citation type="journal article" date="2017" name="Plant J.">
        <title>Araport11: a complete reannotation of the Arabidopsis thaliana reference genome.</title>
        <authorList>
            <person name="Cheng C.Y."/>
            <person name="Krishnakumar V."/>
            <person name="Chan A.P."/>
            <person name="Thibaud-Nissen F."/>
            <person name="Schobel S."/>
            <person name="Town C.D."/>
        </authorList>
    </citation>
    <scope>GENOME REANNOTATION</scope>
    <source>
        <strain>cv. Columbia</strain>
    </source>
</reference>
<reference key="4">
    <citation type="journal article" date="2003" name="Science">
        <title>Empirical analysis of transcriptional activity in the Arabidopsis genome.</title>
        <authorList>
            <person name="Yamada K."/>
            <person name="Lim J."/>
            <person name="Dale J.M."/>
            <person name="Chen H."/>
            <person name="Shinn P."/>
            <person name="Palm C.J."/>
            <person name="Southwick A.M."/>
            <person name="Wu H.C."/>
            <person name="Kim C.J."/>
            <person name="Nguyen M."/>
            <person name="Pham P.K."/>
            <person name="Cheuk R.F."/>
            <person name="Karlin-Newmann G."/>
            <person name="Liu S.X."/>
            <person name="Lam B."/>
            <person name="Sakano H."/>
            <person name="Wu T."/>
            <person name="Yu G."/>
            <person name="Miranda M."/>
            <person name="Quach H.L."/>
            <person name="Tripp M."/>
            <person name="Chang C.H."/>
            <person name="Lee J.M."/>
            <person name="Toriumi M.J."/>
            <person name="Chan M.M."/>
            <person name="Tang C.C."/>
            <person name="Onodera C.S."/>
            <person name="Deng J.M."/>
            <person name="Akiyama K."/>
            <person name="Ansari Y."/>
            <person name="Arakawa T."/>
            <person name="Banh J."/>
            <person name="Banno F."/>
            <person name="Bowser L."/>
            <person name="Brooks S.Y."/>
            <person name="Carninci P."/>
            <person name="Chao Q."/>
            <person name="Choy N."/>
            <person name="Enju A."/>
            <person name="Goldsmith A.D."/>
            <person name="Gurjal M."/>
            <person name="Hansen N.F."/>
            <person name="Hayashizaki Y."/>
            <person name="Johnson-Hopson C."/>
            <person name="Hsuan V.W."/>
            <person name="Iida K."/>
            <person name="Karnes M."/>
            <person name="Khan S."/>
            <person name="Koesema E."/>
            <person name="Ishida J."/>
            <person name="Jiang P.X."/>
            <person name="Jones T."/>
            <person name="Kawai J."/>
            <person name="Kamiya A."/>
            <person name="Meyers C."/>
            <person name="Nakajima M."/>
            <person name="Narusaka M."/>
            <person name="Seki M."/>
            <person name="Sakurai T."/>
            <person name="Satou M."/>
            <person name="Tamse R."/>
            <person name="Vaysberg M."/>
            <person name="Wallender E.K."/>
            <person name="Wong C."/>
            <person name="Yamamura Y."/>
            <person name="Yuan S."/>
            <person name="Shinozaki K."/>
            <person name="Davis R.W."/>
            <person name="Theologis A."/>
            <person name="Ecker J.R."/>
        </authorList>
    </citation>
    <scope>NUCLEOTIDE SEQUENCE [LARGE SCALE MRNA]</scope>
    <source>
        <strain>cv. Columbia</strain>
    </source>
</reference>
<reference key="5">
    <citation type="submission" date="2002-03" db="EMBL/GenBank/DDBJ databases">
        <title>Full-length cDNA from Arabidopsis thaliana.</title>
        <authorList>
            <person name="Brover V.V."/>
            <person name="Troukhan M.E."/>
            <person name="Alexandrov N.A."/>
            <person name="Lu Y.-P."/>
            <person name="Flavell R.B."/>
            <person name="Feldmann K.A."/>
        </authorList>
    </citation>
    <scope>NUCLEOTIDE SEQUENCE [LARGE SCALE MRNA]</scope>
</reference>
<reference key="6">
    <citation type="online journal article" date="1995" name="Plant Gene Register">
        <title>Nucleotide sequence of a cDNA encoding the glucose-6-phosphate dehydrogenase from Arabidopsis thaliana.</title>
        <authorList>
            <person name="Fink A."/>
            <person name="Greppin H."/>
            <person name="Tacchini P."/>
        </authorList>
        <locator>PGR95-021</locator>
    </citation>
    <scope>NUCLEOTIDE SEQUENCE [MRNA] OF 17-576</scope>
    <source>
        <strain>cv. Columbia</strain>
    </source>
</reference>
<reference key="7">
    <citation type="journal article" date="2005" name="Plant J.">
        <title>Genome-wide analysis of glucose-6-phosphate dehydrogenases in Arabidopsis.</title>
        <authorList>
            <person name="Wakao S."/>
            <person name="Benning C."/>
        </authorList>
    </citation>
    <scope>FUNCTION</scope>
    <scope>CATALYTIC ACTIVITY</scope>
    <scope>BIOPHYSICOCHEMICAL PROPERTIES</scope>
    <scope>TISSUE SPECIFICITY</scope>
</reference>
<reference key="8">
    <citation type="journal article" date="2011" name="Plant J.">
        <title>Alternative targeting of Arabidopsis plastidic glucose-6-phosphate dehydrogenase G6PD1 involves cysteine-dependent interaction with G6PD4 in the cytosol.</title>
        <authorList>
            <person name="Meyer T."/>
            <person name="Hoelscher C."/>
            <person name="Schwoeppe C."/>
            <person name="von Schaewen A."/>
        </authorList>
    </citation>
    <scope>INTERACTION WITH G6PD2; G6PD3 AND G6PD4</scope>
    <scope>SUBCELLULAR LOCATION</scope>
    <scope>MUTAGENESIS OF CYS-149; CYS-157 AND LYS-565</scope>
</reference>
<sequence length="576" mass="65428">MATHSMIIPSPSSSSSSLATAASPFKETLPLFSRSLTFPRKSLFSQVRLRFFAEKHSQLDTSNGCATNFASLQDSGDQLTEEHVTKGESTLSITVVGASGDLAKKKIFPALFALFYEGCLPQDFSVFGYARTKLTHEELRDMISSTLTCRIDQREKCGDKMEQFLKRCFYHSGQYNSEEDFAELNKKLKEKEAGKISNRLYYLSIPPNIFVDVVRCASLRASSENGWTRVIVEKPFGRDSESSGELTRCLKQYLTEEQIFRIDHYLGKELVENLSVLRFSNLVFEPLWSRNYIRNVQLIFSEDFGTEGRGGYFDQYGIIRDIMQNHLLQILALFAMETPVSLDAEDIRSEKVKVLRSMKPLRLEDVVVGQYKGHNKGGKTYPGYTDDPTVPNHSLTPTFAAAAMFINNARWDGVPFLMKAGKALHTRGAEIRVQFRHVPGNLYKKSFATNLDNATNELVIRVQPDEGIYLRINNKVPGLGMRLDRSDLNLLYRSRYPREIPDAYERLLLDAIEGERRLFIRSDELDAAWDLFTPALKELEEKKIIPELYPYGSRGPVGAHYLASKYNVRWGDLGEA</sequence>
<proteinExistence type="evidence at protein level"/>
<accession>Q43727</accession>
<accession>O65577</accession>
<accession>Q9FFM5</accession>
<name>G6PD1_ARATH</name>
<protein>
    <recommendedName>
        <fullName evidence="8">Glucose-6-phosphate 1-dehydrogenase 1, chloroplastic</fullName>
        <shortName evidence="7">AtG6PD1</shortName>
        <shortName evidence="8">G6PDH1</shortName>
        <ecNumber evidence="5">1.1.1.49</ecNumber>
    </recommendedName>
</protein>
<feature type="transit peptide" description="Chloroplast" evidence="4">
    <location>
        <begin position="1"/>
        <end position="50"/>
    </location>
</feature>
<feature type="chain" id="PRO_0000010435" description="Glucose-6-phosphate 1-dehydrogenase 1, chloroplastic">
    <location>
        <begin position="51"/>
        <end position="576"/>
    </location>
</feature>
<feature type="active site" description="Proton acceptor" evidence="1">
    <location>
        <position position="326"/>
    </location>
</feature>
<feature type="binding site" evidence="2">
    <location>
        <begin position="97"/>
        <end position="104"/>
    </location>
    <ligand>
        <name>NADP(+)</name>
        <dbReference type="ChEBI" id="CHEBI:58349"/>
        <label>1</label>
    </ligand>
</feature>
<feature type="binding site" evidence="2">
    <location>
        <position position="131"/>
    </location>
    <ligand>
        <name>NADP(+)</name>
        <dbReference type="ChEBI" id="CHEBI:58349"/>
        <label>1</label>
    </ligand>
</feature>
<feature type="binding site" evidence="2">
    <location>
        <position position="234"/>
    </location>
    <ligand>
        <name>D-glucose 6-phosphate</name>
        <dbReference type="ChEBI" id="CHEBI:61548"/>
    </ligand>
</feature>
<feature type="binding site" evidence="2">
    <location>
        <position position="234"/>
    </location>
    <ligand>
        <name>NADP(+)</name>
        <dbReference type="ChEBI" id="CHEBI:58349"/>
        <label>1</label>
    </ligand>
</feature>
<feature type="binding site" evidence="2">
    <location>
        <begin position="264"/>
        <end position="268"/>
    </location>
    <ligand>
        <name>D-glucose 6-phosphate</name>
        <dbReference type="ChEBI" id="CHEBI:61548"/>
    </ligand>
</feature>
<feature type="binding site" evidence="2">
    <location>
        <position position="302"/>
    </location>
    <ligand>
        <name>D-glucose 6-phosphate</name>
        <dbReference type="ChEBI" id="CHEBI:61548"/>
    </ligand>
</feature>
<feature type="binding site" evidence="2">
    <location>
        <position position="321"/>
    </location>
    <ligand>
        <name>D-glucose 6-phosphate</name>
        <dbReference type="ChEBI" id="CHEBI:61548"/>
    </ligand>
</feature>
<feature type="binding site" evidence="2">
    <location>
        <position position="419"/>
    </location>
    <ligand>
        <name>NADP(+)</name>
        <dbReference type="ChEBI" id="CHEBI:58349"/>
        <label>2</label>
    </ligand>
</feature>
<feature type="binding site" evidence="2">
    <location>
        <position position="422"/>
    </location>
    <ligand>
        <name>D-glucose 6-phosphate</name>
        <dbReference type="ChEBI" id="CHEBI:61548"/>
    </ligand>
</feature>
<feature type="binding site" evidence="2">
    <location>
        <position position="427"/>
    </location>
    <ligand>
        <name>D-glucose 6-phosphate</name>
        <dbReference type="ChEBI" id="CHEBI:61548"/>
    </ligand>
</feature>
<feature type="binding site" evidence="2">
    <location>
        <position position="432"/>
    </location>
    <ligand>
        <name>NADP(+)</name>
        <dbReference type="ChEBI" id="CHEBI:58349"/>
        <label>2</label>
    </ligand>
</feature>
<feature type="binding site" evidence="2">
    <location>
        <position position="461"/>
    </location>
    <ligand>
        <name>NADP(+)</name>
        <dbReference type="ChEBI" id="CHEBI:58349"/>
        <label>2</label>
    </ligand>
</feature>
<feature type="binding site" evidence="2">
    <location>
        <position position="463"/>
    </location>
    <ligand>
        <name>D-glucose 6-phosphate</name>
        <dbReference type="ChEBI" id="CHEBI:61548"/>
    </ligand>
</feature>
<feature type="binding site" evidence="2">
    <location>
        <begin position="469"/>
        <end position="471"/>
    </location>
    <ligand>
        <name>NADP(+)</name>
        <dbReference type="ChEBI" id="CHEBI:58349"/>
        <label>2</label>
    </ligand>
</feature>
<feature type="binding site" evidence="2">
    <location>
        <position position="554"/>
    </location>
    <ligand>
        <name>NADP(+)</name>
        <dbReference type="ChEBI" id="CHEBI:58349"/>
        <label>2</label>
    </ligand>
</feature>
<feature type="disulfide bond" description="Redox modulation" evidence="3">
    <location>
        <begin position="149"/>
        <end position="157"/>
    </location>
</feature>
<feature type="mutagenesis site" description="No effect on the interaction with G6PD4." evidence="6">
    <original>C</original>
    <variation>S</variation>
    <location>
        <position position="149"/>
    </location>
</feature>
<feature type="mutagenesis site" description="No effect on the interaction with G6PD4." evidence="6">
    <original>C</original>
    <variation>S</variation>
    <location>
        <position position="157"/>
    </location>
</feature>
<feature type="mutagenesis site" description="Abolishes targeting to peroxisome." evidence="6">
    <original>K</original>
    <variation>E</variation>
    <location>
        <position position="565"/>
    </location>
</feature>
<feature type="sequence conflict" description="In Ref. 6; CAA59012." evidence="8" ref="6">
    <original>A</original>
    <variation>D</variation>
    <location>
        <position position="110"/>
    </location>
</feature>
<feature type="sequence conflict" description="In Ref. 1; CAA04696." evidence="8" ref="1">
    <original>IPPNIFVDV</original>
    <variation>STPKLLVDE</variation>
    <location>
        <begin position="205"/>
        <end position="213"/>
    </location>
</feature>
<feature type="sequence conflict" description="In Ref. 6; CAA59012." evidence="8" ref="6">
    <original>Q</original>
    <variation>E</variation>
    <location>
        <position position="297"/>
    </location>
</feature>
<feature type="sequence conflict" description="In Ref. 6; CAA59012." evidence="8" ref="6">
    <original>G</original>
    <variation>A</variation>
    <location>
        <position position="383"/>
    </location>
</feature>
<feature type="sequence conflict" description="In Ref. 1; CAA04696." evidence="8" ref="1">
    <original>RS</original>
    <variation>PR</variation>
    <location>
        <begin position="485"/>
        <end position="486"/>
    </location>
</feature>
<feature type="sequence conflict" description="In Ref. 1; CAA04696." evidence="8" ref="1">
    <original>G</original>
    <variation>A</variation>
    <location>
        <position position="514"/>
    </location>
</feature>
<feature type="sequence conflict" description="In Ref. 1; CAA04696." evidence="8" ref="1">
    <original>D</original>
    <variation>E</variation>
    <location>
        <position position="530"/>
    </location>
</feature>
<feature type="sequence conflict" description="In Ref. 1; CAA04696." evidence="8" ref="1">
    <original>L</original>
    <variation>R</variation>
    <location>
        <position position="539"/>
    </location>
</feature>